<comment type="function">
    <text evidence="1">Required for the insertion and/or proper folding and/or complex formation of integral membrane proteins into the membrane. Involved in integration of membrane proteins that insert both dependently and independently of the Sec translocase complex, as well as at least some lipoproteins. Aids folding of multispanning membrane proteins.</text>
</comment>
<comment type="subunit">
    <text evidence="1">Interacts with the Sec translocase complex via SecD. Specifically interacts with transmembrane segments of nascent integral membrane proteins during membrane integration.</text>
</comment>
<comment type="subcellular location">
    <subcellularLocation>
        <location evidence="1">Cell inner membrane</location>
        <topology evidence="1">Multi-pass membrane protein</topology>
    </subcellularLocation>
</comment>
<comment type="similarity">
    <text evidence="1">Belongs to the OXA1/ALB3/YidC family. Type 1 subfamily.</text>
</comment>
<evidence type="ECO:0000255" key="1">
    <source>
        <dbReference type="HAMAP-Rule" id="MF_01810"/>
    </source>
</evidence>
<evidence type="ECO:0000256" key="2">
    <source>
        <dbReference type="SAM" id="MobiDB-lite"/>
    </source>
</evidence>
<dbReference type="EMBL" id="AE000511">
    <property type="protein sequence ID" value="AAD08491.1"/>
    <property type="molecule type" value="Genomic_DNA"/>
</dbReference>
<dbReference type="PIR" id="B64701">
    <property type="entry name" value="B64701"/>
</dbReference>
<dbReference type="RefSeq" id="NP_208241.1">
    <property type="nucleotide sequence ID" value="NC_000915.1"/>
</dbReference>
<dbReference type="RefSeq" id="WP_000360153.1">
    <property type="nucleotide sequence ID" value="NC_018939.1"/>
</dbReference>
<dbReference type="SMR" id="O25989"/>
<dbReference type="DIP" id="DIP-3087N"/>
<dbReference type="FunCoup" id="O25989">
    <property type="interactions" value="188"/>
</dbReference>
<dbReference type="IntAct" id="O25989">
    <property type="interactions" value="3"/>
</dbReference>
<dbReference type="MINT" id="O25989"/>
<dbReference type="STRING" id="85962.HP_1450"/>
<dbReference type="PaxDb" id="85962-C694_07510"/>
<dbReference type="DNASU" id="899843"/>
<dbReference type="EnsemblBacteria" id="AAD08491">
    <property type="protein sequence ID" value="AAD08491"/>
    <property type="gene ID" value="HP_1450"/>
</dbReference>
<dbReference type="KEGG" id="heo:C694_07510"/>
<dbReference type="KEGG" id="hpy:HP_1450"/>
<dbReference type="PATRIC" id="fig|85962.47.peg.1559"/>
<dbReference type="eggNOG" id="COG0706">
    <property type="taxonomic scope" value="Bacteria"/>
</dbReference>
<dbReference type="InParanoid" id="O25989"/>
<dbReference type="OrthoDB" id="9780552at2"/>
<dbReference type="Proteomes" id="UP000000429">
    <property type="component" value="Chromosome"/>
</dbReference>
<dbReference type="GO" id="GO:0005886">
    <property type="term" value="C:plasma membrane"/>
    <property type="evidence" value="ECO:0000318"/>
    <property type="project" value="GO_Central"/>
</dbReference>
<dbReference type="GO" id="GO:0032977">
    <property type="term" value="F:membrane insertase activity"/>
    <property type="evidence" value="ECO:0000318"/>
    <property type="project" value="GO_Central"/>
</dbReference>
<dbReference type="GO" id="GO:0051205">
    <property type="term" value="P:protein insertion into membrane"/>
    <property type="evidence" value="ECO:0000318"/>
    <property type="project" value="GO_Central"/>
</dbReference>
<dbReference type="GO" id="GO:0015031">
    <property type="term" value="P:protein transport"/>
    <property type="evidence" value="ECO:0007669"/>
    <property type="project" value="UniProtKB-KW"/>
</dbReference>
<dbReference type="CDD" id="cd20070">
    <property type="entry name" value="5TM_YidC_Alb3"/>
    <property type="match status" value="1"/>
</dbReference>
<dbReference type="CDD" id="cd19960">
    <property type="entry name" value="YidC_peri"/>
    <property type="match status" value="1"/>
</dbReference>
<dbReference type="FunFam" id="2.70.98.90:FF:000010">
    <property type="entry name" value="Membrane protein insertase YidC"/>
    <property type="match status" value="1"/>
</dbReference>
<dbReference type="Gene3D" id="2.70.98.90">
    <property type="match status" value="1"/>
</dbReference>
<dbReference type="HAMAP" id="MF_01810">
    <property type="entry name" value="YidC_type1"/>
    <property type="match status" value="1"/>
</dbReference>
<dbReference type="InterPro" id="IPR019998">
    <property type="entry name" value="Membr_insert_YidC"/>
</dbReference>
<dbReference type="InterPro" id="IPR028053">
    <property type="entry name" value="Membr_insert_YidC_N"/>
</dbReference>
<dbReference type="InterPro" id="IPR001708">
    <property type="entry name" value="YidC/ALB3/OXA1/COX18"/>
</dbReference>
<dbReference type="InterPro" id="IPR028055">
    <property type="entry name" value="YidC/Oxa/ALB_C"/>
</dbReference>
<dbReference type="InterPro" id="IPR047196">
    <property type="entry name" value="YidC_ALB_C"/>
</dbReference>
<dbReference type="InterPro" id="IPR038221">
    <property type="entry name" value="YidC_periplasmic_sf"/>
</dbReference>
<dbReference type="NCBIfam" id="NF002354">
    <property type="entry name" value="PRK01318.2-1"/>
    <property type="match status" value="1"/>
</dbReference>
<dbReference type="NCBIfam" id="NF002357">
    <property type="entry name" value="PRK01318.2-4"/>
    <property type="match status" value="1"/>
</dbReference>
<dbReference type="NCBIfam" id="TIGR03593">
    <property type="entry name" value="yidC_nterm"/>
    <property type="match status" value="1"/>
</dbReference>
<dbReference type="NCBIfam" id="TIGR03592">
    <property type="entry name" value="yidC_oxa1_cterm"/>
    <property type="match status" value="1"/>
</dbReference>
<dbReference type="PANTHER" id="PTHR12428:SF65">
    <property type="entry name" value="CYTOCHROME C OXIDASE ASSEMBLY PROTEIN COX18, MITOCHONDRIAL"/>
    <property type="match status" value="1"/>
</dbReference>
<dbReference type="PANTHER" id="PTHR12428">
    <property type="entry name" value="OXA1"/>
    <property type="match status" value="1"/>
</dbReference>
<dbReference type="Pfam" id="PF02096">
    <property type="entry name" value="60KD_IMP"/>
    <property type="match status" value="1"/>
</dbReference>
<dbReference type="Pfam" id="PF14849">
    <property type="entry name" value="YidC_periplas"/>
    <property type="match status" value="1"/>
</dbReference>
<dbReference type="PRINTS" id="PR01900">
    <property type="entry name" value="YIDCPROTEIN"/>
</dbReference>
<gene>
    <name evidence="1" type="primary">yidC</name>
    <name type="ordered locus">HP_1450</name>
</gene>
<keyword id="KW-0997">Cell inner membrane</keyword>
<keyword id="KW-1003">Cell membrane</keyword>
<keyword id="KW-0143">Chaperone</keyword>
<keyword id="KW-0472">Membrane</keyword>
<keyword id="KW-0653">Protein transport</keyword>
<keyword id="KW-1185">Reference proteome</keyword>
<keyword id="KW-0812">Transmembrane</keyword>
<keyword id="KW-1133">Transmembrane helix</keyword>
<keyword id="KW-0813">Transport</keyword>
<reference key="1">
    <citation type="journal article" date="1997" name="Nature">
        <title>The complete genome sequence of the gastric pathogen Helicobacter pylori.</title>
        <authorList>
            <person name="Tomb J.-F."/>
            <person name="White O."/>
            <person name="Kerlavage A.R."/>
            <person name="Clayton R.A."/>
            <person name="Sutton G.G."/>
            <person name="Fleischmann R.D."/>
            <person name="Ketchum K.A."/>
            <person name="Klenk H.-P."/>
            <person name="Gill S.R."/>
            <person name="Dougherty B.A."/>
            <person name="Nelson K.E."/>
            <person name="Quackenbush J."/>
            <person name="Zhou L."/>
            <person name="Kirkness E.F."/>
            <person name="Peterson S.N."/>
            <person name="Loftus B.J."/>
            <person name="Richardson D.L."/>
            <person name="Dodson R.J."/>
            <person name="Khalak H.G."/>
            <person name="Glodek A."/>
            <person name="McKenney K."/>
            <person name="FitzGerald L.M."/>
            <person name="Lee N."/>
            <person name="Adams M.D."/>
            <person name="Hickey E.K."/>
            <person name="Berg D.E."/>
            <person name="Gocayne J.D."/>
            <person name="Utterback T.R."/>
            <person name="Peterson J.D."/>
            <person name="Kelley J.M."/>
            <person name="Cotton M.D."/>
            <person name="Weidman J.F."/>
            <person name="Fujii C."/>
            <person name="Bowman C."/>
            <person name="Watthey L."/>
            <person name="Wallin E."/>
            <person name="Hayes W.S."/>
            <person name="Borodovsky M."/>
            <person name="Karp P.D."/>
            <person name="Smith H.O."/>
            <person name="Fraser C.M."/>
            <person name="Venter J.C."/>
        </authorList>
    </citation>
    <scope>NUCLEOTIDE SEQUENCE [LARGE SCALE GENOMIC DNA]</scope>
    <source>
        <strain>ATCC 700392 / 26695</strain>
    </source>
</reference>
<proteinExistence type="inferred from homology"/>
<organism>
    <name type="scientific">Helicobacter pylori (strain ATCC 700392 / 26695)</name>
    <name type="common">Campylobacter pylori</name>
    <dbReference type="NCBI Taxonomy" id="85962"/>
    <lineage>
        <taxon>Bacteria</taxon>
        <taxon>Pseudomonadati</taxon>
        <taxon>Campylobacterota</taxon>
        <taxon>Epsilonproteobacteria</taxon>
        <taxon>Campylobacterales</taxon>
        <taxon>Helicobacteraceae</taxon>
        <taxon>Helicobacter</taxon>
    </lineage>
</organism>
<accession>O25989</accession>
<name>YIDC_HELPY</name>
<feature type="chain" id="PRO_0000124719" description="Membrane protein insertase YidC">
    <location>
        <begin position="1"/>
        <end position="547"/>
    </location>
</feature>
<feature type="transmembrane region" description="Helical" evidence="1">
    <location>
        <begin position="8"/>
        <end position="28"/>
    </location>
</feature>
<feature type="transmembrane region" description="Helical" evidence="1">
    <location>
        <begin position="325"/>
        <end position="345"/>
    </location>
</feature>
<feature type="transmembrane region" description="Helical" evidence="1">
    <location>
        <begin position="348"/>
        <end position="368"/>
    </location>
</feature>
<feature type="transmembrane region" description="Helical" evidence="1">
    <location>
        <begin position="414"/>
        <end position="434"/>
    </location>
</feature>
<feature type="transmembrane region" description="Helical" evidence="1">
    <location>
        <begin position="449"/>
        <end position="469"/>
    </location>
</feature>
<feature type="transmembrane region" description="Helical" evidence="1">
    <location>
        <begin position="495"/>
        <end position="515"/>
    </location>
</feature>
<feature type="region of interest" description="Disordered" evidence="2">
    <location>
        <begin position="37"/>
        <end position="62"/>
    </location>
</feature>
<feature type="compositionally biased region" description="Low complexity" evidence="2">
    <location>
        <begin position="37"/>
        <end position="50"/>
    </location>
</feature>
<feature type="compositionally biased region" description="Polar residues" evidence="2">
    <location>
        <begin position="51"/>
        <end position="62"/>
    </location>
</feature>
<sequence>MDKNNNNLRLILAIALSFLFIALYSYFFQKPNKTTTQTTKQETTNNHTATSPNAPNAQHFSTTQTTPQENLLSTISFEHARIEIDSLGRIKQVYLKDKKYLTPKQKGFLEHVGHLFSSKENAQPPLKELPLLAADKLKPLEVRFLDPTLNNKAFNTPYSASKTTLGPNEQLVLTQDLGTLSIIKTLTFYDDLHYDLKIAFKSPNNLIPSYVITNGYRPVADLDSYTFSGVLLENSDKKIEKIEDKDAKEIKRFSNTLFLSSVDRYFTTLLFTKDPQGFEALIDSEIGTKNPLGFISLKNEANLHGYIGPKDYRSLKAISPMLTDVIEYGLITFFAKGVFVLLDYLYQFVGNWGWAIILLTIIVRIILYPLSYKGMVSMQKLKELAPKMKELQEKYKGEPQKLQAHMMQLYKKHGANPLGGCLPLILQIPVFFAIYRVLYNAVELKSSEWILWIHDLSIMDPYFILPLLMGASMYWHQSVTPNTMTDPMQAKIFKLLPLLFTIFLITFPAGLVLYWTTNNILSVLQQLIINKVLENKKRMHAQNKKEH</sequence>
<protein>
    <recommendedName>
        <fullName evidence="1">Membrane protein insertase YidC</fullName>
    </recommendedName>
    <alternativeName>
        <fullName evidence="1">Foldase YidC</fullName>
    </alternativeName>
    <alternativeName>
        <fullName evidence="1">Membrane integrase YidC</fullName>
    </alternativeName>
    <alternativeName>
        <fullName evidence="1">Membrane protein YidC</fullName>
    </alternativeName>
</protein>